<comment type="function">
    <text evidence="3 4">May act as a scaffolding protein within caveolar membranes. Forms a stable heterooligomeric complex with CAV2 that targets to lipid rafts and drives caveolae formation. Mediates the recruitment of CAVIN proteins (CAVIN1/2/3/4) to the caveolae (By similarity). Interacts directly with G-protein alpha subunits and can functionally regulate their activity (By similarity). Involved in the costimulatory signal essential for T-cell receptor (TCR)-mediated T-cell activation. Its binding to DPP4 induces T-cell proliferation and NF-kappa-B activation in a T-cell receptor/CD3-dependent manner (By similarity). Recruits CTNNB1 to caveolar membranes and may regulate CTNNB1-mediated signaling through the Wnt pathway (By similarity). Negatively regulates TGFB1-mediated activation of SMAD2/3 by mediating the internalization of TGFBR1 from membrane rafts leading to its subsequent degradation (By similarity). Binds 20(S)-hydroxycholesterol (20(S)-OHC) (By similarity).</text>
</comment>
<comment type="subunit">
    <text evidence="2 3 4 5">Homooligomer. Interacts with GLIPR2. Interacts with NOSTRIN (By similarity). Interacts with SNAP25 and STX1A (By similarity). Interacts (via the N-terminus) with DPP4; the interaction is direct (By similarity). Interacts with CTNNB1, CDH1 and JUP. Interacts with PACSIN2; this interaction induces membrane tubulation (By similarity). Interacts with SLC7A9 (By similarity). Interacts with BMX and BTK. Interacts with TGFBR1. Interacts with CAVIN3 (via leucine-zipper domain) in a cholesterol-sensitive manner. Interacts with CAVIN1. Interacts with EHD2 in a cholesterol-dependent manner. Forms a ternary complex with UBXN6 and VCP; mediates CAV1 targeting to lysosomes for degradation. Interacts with ABCG1; this interaction regulates ABCG1-mediated cholesterol efflux (By similarity). Interacts with NEU3; this interaction enhances NEU3 sialidase activity within caveola. Interacts (via C-terminus) with SPRY1, SPRY2 (via C-terminus), SPRY3, and SPRY4 (By similarity). Interacts with IGFBP5; this interaction allows trafficking of IGFBP5 from the plasma membrane to the nucleus (By similarity).</text>
</comment>
<comment type="subcellular location">
    <subcellularLocation>
        <location evidence="1">Golgi apparatus membrane</location>
        <topology evidence="1">Peripheral membrane protein</topology>
    </subcellularLocation>
    <subcellularLocation>
        <location evidence="1">Cell membrane</location>
        <topology evidence="1">Peripheral membrane protein</topology>
    </subcellularLocation>
    <subcellularLocation>
        <location evidence="3">Membrane</location>
        <location evidence="3">Caveola</location>
        <topology evidence="1">Peripheral membrane protein</topology>
    </subcellularLocation>
    <subcellularLocation>
        <location evidence="4">Membrane raft</location>
    </subcellularLocation>
    <text evidence="1">Colocalized with DPP4 in membrane rafts. Potential hairpin-like structure in the membrane. Membrane protein of caveolae (By similarity).</text>
</comment>
<comment type="PTM">
    <text evidence="4">Phosphorylated at Tyr-14 by ABL1 in response to oxidative stress.</text>
</comment>
<comment type="PTM">
    <text evidence="4">Ubiquitinated. Undergo monoubiquitination and multi- and/or polyubiquitination. Monoubiquitination of N-terminal lysines promotes integration in a ternary complex with UBXN6 and VCP which promotes oligomeric CAV1 targeting to lysosomes for degradation. Ubiquitinated by ZNRF1; leading to degradation and modulation of the TLR4-mediated immune response.</text>
</comment>
<comment type="similarity">
    <text evidence="7">Belongs to the caveolin family.</text>
</comment>
<protein>
    <recommendedName>
        <fullName>Caveolin-1</fullName>
    </recommendedName>
</protein>
<dbReference type="EMBL" id="DP000233">
    <property type="protein sequence ID" value="AAR16220.1"/>
    <property type="molecule type" value="Genomic_DNA"/>
</dbReference>
<dbReference type="RefSeq" id="NP_001162182.1">
    <property type="nucleotide sequence ID" value="NM_001168711.1"/>
</dbReference>
<dbReference type="SMR" id="A0M8R6"/>
<dbReference type="STRING" id="9555.ENSPANP00000016612"/>
<dbReference type="Ensembl" id="ENSPANT00000023926.3">
    <property type="protein sequence ID" value="ENSPANP00000016612.1"/>
    <property type="gene ID" value="ENSPANG00000015174.3"/>
</dbReference>
<dbReference type="GeneID" id="100126666"/>
<dbReference type="KEGG" id="panu:100126666"/>
<dbReference type="CTD" id="857"/>
<dbReference type="eggNOG" id="ENOG502QUK5">
    <property type="taxonomic scope" value="Eukaryota"/>
</dbReference>
<dbReference type="GeneTree" id="ENSGT00950000183006"/>
<dbReference type="HOGENOM" id="CLU_102582_0_0_1"/>
<dbReference type="OMA" id="MSGSKYV"/>
<dbReference type="OrthoDB" id="8217at314294"/>
<dbReference type="Proteomes" id="UP000028761">
    <property type="component" value="Chromosome 4"/>
</dbReference>
<dbReference type="Bgee" id="ENSPANG00000015174">
    <property type="expression patterns" value="Expressed in lung and 62 other cell types or tissues"/>
</dbReference>
<dbReference type="GO" id="GO:0002080">
    <property type="term" value="C:acrosomal membrane"/>
    <property type="evidence" value="ECO:0007669"/>
    <property type="project" value="Ensembl"/>
</dbReference>
<dbReference type="GO" id="GO:0005901">
    <property type="term" value="C:caveola"/>
    <property type="evidence" value="ECO:0000250"/>
    <property type="project" value="UniProtKB"/>
</dbReference>
<dbReference type="GO" id="GO:0002095">
    <property type="term" value="C:caveolar macromolecular signaling complex"/>
    <property type="evidence" value="ECO:0007669"/>
    <property type="project" value="Ensembl"/>
</dbReference>
<dbReference type="GO" id="GO:0005938">
    <property type="term" value="C:cell cortex"/>
    <property type="evidence" value="ECO:0007669"/>
    <property type="project" value="Ensembl"/>
</dbReference>
<dbReference type="GO" id="GO:0005929">
    <property type="term" value="C:cilium"/>
    <property type="evidence" value="ECO:0007669"/>
    <property type="project" value="Ensembl"/>
</dbReference>
<dbReference type="GO" id="GO:0005783">
    <property type="term" value="C:endoplasmic reticulum"/>
    <property type="evidence" value="ECO:0007669"/>
    <property type="project" value="Ensembl"/>
</dbReference>
<dbReference type="GO" id="GO:0005768">
    <property type="term" value="C:endosome"/>
    <property type="evidence" value="ECO:0000250"/>
    <property type="project" value="UniProtKB"/>
</dbReference>
<dbReference type="GO" id="GO:0005925">
    <property type="term" value="C:focal adhesion"/>
    <property type="evidence" value="ECO:0007669"/>
    <property type="project" value="Ensembl"/>
</dbReference>
<dbReference type="GO" id="GO:0000139">
    <property type="term" value="C:Golgi membrane"/>
    <property type="evidence" value="ECO:0007669"/>
    <property type="project" value="UniProtKB-SubCell"/>
</dbReference>
<dbReference type="GO" id="GO:0045121">
    <property type="term" value="C:membrane raft"/>
    <property type="evidence" value="ECO:0000250"/>
    <property type="project" value="UniProtKB"/>
</dbReference>
<dbReference type="GO" id="GO:0048471">
    <property type="term" value="C:perinuclear region of cytoplasm"/>
    <property type="evidence" value="ECO:0007669"/>
    <property type="project" value="Ensembl"/>
</dbReference>
<dbReference type="GO" id="GO:0042383">
    <property type="term" value="C:sarcolemma"/>
    <property type="evidence" value="ECO:0007669"/>
    <property type="project" value="TreeGrafter"/>
</dbReference>
<dbReference type="GO" id="GO:0051117">
    <property type="term" value="F:ATPase binding"/>
    <property type="evidence" value="ECO:0007669"/>
    <property type="project" value="Ensembl"/>
</dbReference>
<dbReference type="GO" id="GO:0042802">
    <property type="term" value="F:identical protein binding"/>
    <property type="evidence" value="ECO:0007669"/>
    <property type="project" value="Ensembl"/>
</dbReference>
<dbReference type="GO" id="GO:0070320">
    <property type="term" value="F:inward rectifier potassium channel inhibitor activity"/>
    <property type="evidence" value="ECO:0007669"/>
    <property type="project" value="Ensembl"/>
</dbReference>
<dbReference type="GO" id="GO:0050998">
    <property type="term" value="F:nitric-oxide synthase binding"/>
    <property type="evidence" value="ECO:0007669"/>
    <property type="project" value="Ensembl"/>
</dbReference>
<dbReference type="GO" id="GO:0008142">
    <property type="term" value="F:oxysterol binding"/>
    <property type="evidence" value="ECO:0000250"/>
    <property type="project" value="UniProtKB"/>
</dbReference>
<dbReference type="GO" id="GO:0016504">
    <property type="term" value="F:peptidase activator activity"/>
    <property type="evidence" value="ECO:0007669"/>
    <property type="project" value="Ensembl"/>
</dbReference>
<dbReference type="GO" id="GO:0046982">
    <property type="term" value="F:protein heterodimerization activity"/>
    <property type="evidence" value="ECO:0007669"/>
    <property type="project" value="Ensembl"/>
</dbReference>
<dbReference type="GO" id="GO:0019901">
    <property type="term" value="F:protein kinase binding"/>
    <property type="evidence" value="ECO:0007669"/>
    <property type="project" value="Ensembl"/>
</dbReference>
<dbReference type="GO" id="GO:0030292">
    <property type="term" value="F:protein tyrosine kinase inhibitor activity"/>
    <property type="evidence" value="ECO:0007669"/>
    <property type="project" value="Ensembl"/>
</dbReference>
<dbReference type="GO" id="GO:0044877">
    <property type="term" value="F:protein-containing complex binding"/>
    <property type="evidence" value="ECO:0007669"/>
    <property type="project" value="Ensembl"/>
</dbReference>
<dbReference type="GO" id="GO:0030674">
    <property type="term" value="F:protein-macromolecule adaptor activity"/>
    <property type="evidence" value="ECO:0007669"/>
    <property type="project" value="Ensembl"/>
</dbReference>
<dbReference type="GO" id="GO:0005102">
    <property type="term" value="F:signaling receptor binding"/>
    <property type="evidence" value="ECO:0007669"/>
    <property type="project" value="Ensembl"/>
</dbReference>
<dbReference type="GO" id="GO:0031267">
    <property type="term" value="F:small GTPase binding"/>
    <property type="evidence" value="ECO:0007669"/>
    <property type="project" value="Ensembl"/>
</dbReference>
<dbReference type="GO" id="GO:0044325">
    <property type="term" value="F:transmembrane transporter binding"/>
    <property type="evidence" value="ECO:0007669"/>
    <property type="project" value="Ensembl"/>
</dbReference>
<dbReference type="GO" id="GO:0001525">
    <property type="term" value="P:angiogenesis"/>
    <property type="evidence" value="ECO:0007669"/>
    <property type="project" value="Ensembl"/>
</dbReference>
<dbReference type="GO" id="GO:0038166">
    <property type="term" value="P:angiotensin-activated signaling pathway"/>
    <property type="evidence" value="ECO:0007669"/>
    <property type="project" value="Ensembl"/>
</dbReference>
<dbReference type="GO" id="GO:0097190">
    <property type="term" value="P:apoptotic signaling pathway"/>
    <property type="evidence" value="ECO:0007669"/>
    <property type="project" value="Ensembl"/>
</dbReference>
<dbReference type="GO" id="GO:0071711">
    <property type="term" value="P:basement membrane organization"/>
    <property type="evidence" value="ECO:0007669"/>
    <property type="project" value="Ensembl"/>
</dbReference>
<dbReference type="GO" id="GO:0006816">
    <property type="term" value="P:calcium ion transport"/>
    <property type="evidence" value="ECO:0007669"/>
    <property type="project" value="Ensembl"/>
</dbReference>
<dbReference type="GO" id="GO:0060070">
    <property type="term" value="P:canonical Wnt signaling pathway"/>
    <property type="evidence" value="ECO:0007669"/>
    <property type="project" value="Ensembl"/>
</dbReference>
<dbReference type="GO" id="GO:0070836">
    <property type="term" value="P:caveola assembly"/>
    <property type="evidence" value="ECO:0007669"/>
    <property type="project" value="Ensembl"/>
</dbReference>
<dbReference type="GO" id="GO:0072584">
    <property type="term" value="P:caveolin-mediated endocytosis"/>
    <property type="evidence" value="ECO:0007669"/>
    <property type="project" value="Ensembl"/>
</dbReference>
<dbReference type="GO" id="GO:0071360">
    <property type="term" value="P:cellular response to exogenous dsRNA"/>
    <property type="evidence" value="ECO:0007669"/>
    <property type="project" value="Ensembl"/>
</dbReference>
<dbReference type="GO" id="GO:0071455">
    <property type="term" value="P:cellular response to hyperoxia"/>
    <property type="evidence" value="ECO:0007669"/>
    <property type="project" value="Ensembl"/>
</dbReference>
<dbReference type="GO" id="GO:0071218">
    <property type="term" value="P:cellular response to misfolded protein"/>
    <property type="evidence" value="ECO:0007669"/>
    <property type="project" value="Ensembl"/>
</dbReference>
<dbReference type="GO" id="GO:0071560">
    <property type="term" value="P:cellular response to transforming growth factor beta stimulus"/>
    <property type="evidence" value="ECO:0007669"/>
    <property type="project" value="Ensembl"/>
</dbReference>
<dbReference type="GO" id="GO:0042632">
    <property type="term" value="P:cholesterol homeostasis"/>
    <property type="evidence" value="ECO:0007669"/>
    <property type="project" value="Ensembl"/>
</dbReference>
<dbReference type="GO" id="GO:0019221">
    <property type="term" value="P:cytokine-mediated signaling pathway"/>
    <property type="evidence" value="ECO:0007669"/>
    <property type="project" value="Ensembl"/>
</dbReference>
<dbReference type="GO" id="GO:0001935">
    <property type="term" value="P:endothelial cell proliferation"/>
    <property type="evidence" value="ECO:0007669"/>
    <property type="project" value="Ensembl"/>
</dbReference>
<dbReference type="GO" id="GO:0051649">
    <property type="term" value="P:establishment of localization in cell"/>
    <property type="evidence" value="ECO:0007669"/>
    <property type="project" value="Ensembl"/>
</dbReference>
<dbReference type="GO" id="GO:0048144">
    <property type="term" value="P:fibroblast proliferation"/>
    <property type="evidence" value="ECO:0007669"/>
    <property type="project" value="Ensembl"/>
</dbReference>
<dbReference type="GO" id="GO:0002067">
    <property type="term" value="P:glandular epithelial cell differentiation"/>
    <property type="evidence" value="ECO:0007669"/>
    <property type="project" value="Ensembl"/>
</dbReference>
<dbReference type="GO" id="GO:0038016">
    <property type="term" value="P:insulin receptor internalization"/>
    <property type="evidence" value="ECO:0007669"/>
    <property type="project" value="Ensembl"/>
</dbReference>
<dbReference type="GO" id="GO:0033484">
    <property type="term" value="P:intracellular nitric oxide homeostasis"/>
    <property type="evidence" value="ECO:0007669"/>
    <property type="project" value="Ensembl"/>
</dbReference>
<dbReference type="GO" id="GO:0007595">
    <property type="term" value="P:lactation"/>
    <property type="evidence" value="ECO:0007669"/>
    <property type="project" value="Ensembl"/>
</dbReference>
<dbReference type="GO" id="GO:0019915">
    <property type="term" value="P:lipid storage"/>
    <property type="evidence" value="ECO:0007669"/>
    <property type="project" value="Ensembl"/>
</dbReference>
<dbReference type="GO" id="GO:0060056">
    <property type="term" value="P:mammary gland involution"/>
    <property type="evidence" value="ECO:0007669"/>
    <property type="project" value="Ensembl"/>
</dbReference>
<dbReference type="GO" id="GO:0000165">
    <property type="term" value="P:MAPK cascade"/>
    <property type="evidence" value="ECO:0007669"/>
    <property type="project" value="Ensembl"/>
</dbReference>
<dbReference type="GO" id="GO:0051899">
    <property type="term" value="P:membrane depolarization"/>
    <property type="evidence" value="ECO:0007669"/>
    <property type="project" value="Ensembl"/>
</dbReference>
<dbReference type="GO" id="GO:0046716">
    <property type="term" value="P:muscle cell cellular homeostasis"/>
    <property type="evidence" value="ECO:0007669"/>
    <property type="project" value="Ensembl"/>
</dbReference>
<dbReference type="GO" id="GO:2000811">
    <property type="term" value="P:negative regulation of anoikis"/>
    <property type="evidence" value="ECO:0007669"/>
    <property type="project" value="Ensembl"/>
</dbReference>
<dbReference type="GO" id="GO:0090090">
    <property type="term" value="P:negative regulation of canonical Wnt signaling pathway"/>
    <property type="evidence" value="ECO:0007669"/>
    <property type="project" value="Ensembl"/>
</dbReference>
<dbReference type="GO" id="GO:0001960">
    <property type="term" value="P:negative regulation of cytokine-mediated signaling pathway"/>
    <property type="evidence" value="ECO:0007669"/>
    <property type="project" value="Ensembl"/>
</dbReference>
<dbReference type="GO" id="GO:0001937">
    <property type="term" value="P:negative regulation of endothelial cell proliferation"/>
    <property type="evidence" value="ECO:0007669"/>
    <property type="project" value="Ensembl"/>
</dbReference>
<dbReference type="GO" id="GO:0030857">
    <property type="term" value="P:negative regulation of epithelial cell differentiation"/>
    <property type="evidence" value="ECO:0007669"/>
    <property type="project" value="Ensembl"/>
</dbReference>
<dbReference type="GO" id="GO:0048147">
    <property type="term" value="P:negative regulation of fibroblast proliferation"/>
    <property type="evidence" value="ECO:0007669"/>
    <property type="project" value="Ensembl"/>
</dbReference>
<dbReference type="GO" id="GO:0043409">
    <property type="term" value="P:negative regulation of MAPK cascade"/>
    <property type="evidence" value="ECO:0007669"/>
    <property type="project" value="Ensembl"/>
</dbReference>
<dbReference type="GO" id="GO:0060546">
    <property type="term" value="P:negative regulation of necroptotic process"/>
    <property type="evidence" value="ECO:0007669"/>
    <property type="project" value="Ensembl"/>
</dbReference>
<dbReference type="GO" id="GO:0045019">
    <property type="term" value="P:negative regulation of nitric oxide biosynthetic process"/>
    <property type="evidence" value="ECO:0007669"/>
    <property type="project" value="Ensembl"/>
</dbReference>
<dbReference type="GO" id="GO:0048550">
    <property type="term" value="P:negative regulation of pinocytosis"/>
    <property type="evidence" value="ECO:0007669"/>
    <property type="project" value="Ensembl"/>
</dbReference>
<dbReference type="GO" id="GO:1901380">
    <property type="term" value="P:negative regulation of potassium ion transmembrane transport"/>
    <property type="evidence" value="ECO:0007669"/>
    <property type="project" value="Ensembl"/>
</dbReference>
<dbReference type="GO" id="GO:0031397">
    <property type="term" value="P:negative regulation of protein ubiquitination"/>
    <property type="evidence" value="ECO:0007669"/>
    <property type="project" value="Ensembl"/>
</dbReference>
<dbReference type="GO" id="GO:0046426">
    <property type="term" value="P:negative regulation of receptor signaling pathway via JAK-STAT"/>
    <property type="evidence" value="ECO:0007669"/>
    <property type="project" value="Ensembl"/>
</dbReference>
<dbReference type="GO" id="GO:0000122">
    <property type="term" value="P:negative regulation of transcription by RNA polymerase II"/>
    <property type="evidence" value="ECO:0007669"/>
    <property type="project" value="Ensembl"/>
</dbReference>
<dbReference type="GO" id="GO:0006809">
    <property type="term" value="P:nitric oxide biosynthetic process"/>
    <property type="evidence" value="ECO:0007669"/>
    <property type="project" value="Ensembl"/>
</dbReference>
<dbReference type="GO" id="GO:0010524">
    <property type="term" value="P:positive regulation of calcium ion transport into cytosol"/>
    <property type="evidence" value="ECO:0007669"/>
    <property type="project" value="Ensembl"/>
</dbReference>
<dbReference type="GO" id="GO:0043123">
    <property type="term" value="P:positive regulation of canonical NF-kappaB signal transduction"/>
    <property type="evidence" value="ECO:0007669"/>
    <property type="project" value="Ensembl"/>
</dbReference>
<dbReference type="GO" id="GO:0060355">
    <property type="term" value="P:positive regulation of cell adhesion molecule production"/>
    <property type="evidence" value="ECO:0007669"/>
    <property type="project" value="Ensembl"/>
</dbReference>
<dbReference type="GO" id="GO:0030335">
    <property type="term" value="P:positive regulation of cell migration"/>
    <property type="evidence" value="ECO:0007669"/>
    <property type="project" value="Ensembl"/>
</dbReference>
<dbReference type="GO" id="GO:0010875">
    <property type="term" value="P:positive regulation of cholesterol efflux"/>
    <property type="evidence" value="ECO:0007669"/>
    <property type="project" value="Ensembl"/>
</dbReference>
<dbReference type="GO" id="GO:0120162">
    <property type="term" value="P:positive regulation of cold-induced thermogenesis"/>
    <property type="evidence" value="ECO:0007669"/>
    <property type="project" value="Ensembl"/>
</dbReference>
<dbReference type="GO" id="GO:1904294">
    <property type="term" value="P:positive regulation of ERAD pathway"/>
    <property type="evidence" value="ECO:0007669"/>
    <property type="project" value="Ensembl"/>
</dbReference>
<dbReference type="GO" id="GO:2001238">
    <property type="term" value="P:positive regulation of extrinsic apoptotic signaling pathway"/>
    <property type="evidence" value="ECO:0007669"/>
    <property type="project" value="Ensembl"/>
</dbReference>
<dbReference type="GO" id="GO:1903598">
    <property type="term" value="P:positive regulation of gap junction assembly"/>
    <property type="evidence" value="ECO:0007669"/>
    <property type="project" value="Ensembl"/>
</dbReference>
<dbReference type="GO" id="GO:0010628">
    <property type="term" value="P:positive regulation of gene expression"/>
    <property type="evidence" value="ECO:0007669"/>
    <property type="project" value="Ensembl"/>
</dbReference>
<dbReference type="GO" id="GO:2001244">
    <property type="term" value="P:positive regulation of intrinsic apoptotic signaling pathway"/>
    <property type="evidence" value="ECO:0007669"/>
    <property type="project" value="Ensembl"/>
</dbReference>
<dbReference type="GO" id="GO:0031398">
    <property type="term" value="P:positive regulation of protein ubiquitination"/>
    <property type="evidence" value="ECO:0007669"/>
    <property type="project" value="Ensembl"/>
</dbReference>
<dbReference type="GO" id="GO:0034141">
    <property type="term" value="P:positive regulation of toll-like receptor 3 signaling pathway"/>
    <property type="evidence" value="ECO:0007669"/>
    <property type="project" value="Ensembl"/>
</dbReference>
<dbReference type="GO" id="GO:0045907">
    <property type="term" value="P:positive regulation of vasoconstriction"/>
    <property type="evidence" value="ECO:0007669"/>
    <property type="project" value="Ensembl"/>
</dbReference>
<dbReference type="GO" id="GO:0010608">
    <property type="term" value="P:post-transcriptional regulation of gene expression"/>
    <property type="evidence" value="ECO:0007669"/>
    <property type="project" value="Ensembl"/>
</dbReference>
<dbReference type="GO" id="GO:0015031">
    <property type="term" value="P:protein transport"/>
    <property type="evidence" value="ECO:0007669"/>
    <property type="project" value="Ensembl"/>
</dbReference>
<dbReference type="GO" id="GO:0031623">
    <property type="term" value="P:receptor internalization"/>
    <property type="evidence" value="ECO:0000250"/>
    <property type="project" value="UniProtKB"/>
</dbReference>
<dbReference type="GO" id="GO:0019065">
    <property type="term" value="P:receptor-mediated endocytosis of virus by host cell"/>
    <property type="evidence" value="ECO:0007669"/>
    <property type="project" value="Ensembl"/>
</dbReference>
<dbReference type="GO" id="GO:0030193">
    <property type="term" value="P:regulation of blood coagulation"/>
    <property type="evidence" value="ECO:0007669"/>
    <property type="project" value="Ensembl"/>
</dbReference>
<dbReference type="GO" id="GO:1901844">
    <property type="term" value="P:regulation of cell communication by electrical coupling involved in cardiac conduction"/>
    <property type="evidence" value="ECO:0007669"/>
    <property type="project" value="Ensembl"/>
</dbReference>
<dbReference type="GO" id="GO:0051480">
    <property type="term" value="P:regulation of cytosolic calcium ion concentration"/>
    <property type="evidence" value="ECO:0007669"/>
    <property type="project" value="Ensembl"/>
</dbReference>
<dbReference type="GO" id="GO:2000535">
    <property type="term" value="P:regulation of entry of bacterium into host cell"/>
    <property type="evidence" value="ECO:0007669"/>
    <property type="project" value="Ensembl"/>
</dbReference>
<dbReference type="GO" id="GO:0019217">
    <property type="term" value="P:regulation of fatty acid metabolic process"/>
    <property type="evidence" value="ECO:0007669"/>
    <property type="project" value="Ensembl"/>
</dbReference>
<dbReference type="GO" id="GO:0086091">
    <property type="term" value="P:regulation of heart rate by cardiac conduction"/>
    <property type="evidence" value="ECO:0007669"/>
    <property type="project" value="Ensembl"/>
</dbReference>
<dbReference type="GO" id="GO:0098903">
    <property type="term" value="P:regulation of membrane repolarization during action potential"/>
    <property type="evidence" value="ECO:0007669"/>
    <property type="project" value="Ensembl"/>
</dbReference>
<dbReference type="GO" id="GO:1900027">
    <property type="term" value="P:regulation of ruffle assembly"/>
    <property type="evidence" value="ECO:0007669"/>
    <property type="project" value="Ensembl"/>
</dbReference>
<dbReference type="GO" id="GO:0006940">
    <property type="term" value="P:regulation of smooth muscle contraction"/>
    <property type="evidence" value="ECO:0007669"/>
    <property type="project" value="Ensembl"/>
</dbReference>
<dbReference type="GO" id="GO:0003057">
    <property type="term" value="P:regulation of the force of heart contraction by chemical signal"/>
    <property type="evidence" value="ECO:0007669"/>
    <property type="project" value="Ensembl"/>
</dbReference>
<dbReference type="GO" id="GO:0098911">
    <property type="term" value="P:regulation of ventricular cardiac muscle cell action potential"/>
    <property type="evidence" value="ECO:0007669"/>
    <property type="project" value="Ensembl"/>
</dbReference>
<dbReference type="GO" id="GO:0009617">
    <property type="term" value="P:response to bacterium"/>
    <property type="evidence" value="ECO:0007669"/>
    <property type="project" value="Ensembl"/>
</dbReference>
<dbReference type="GO" id="GO:0051592">
    <property type="term" value="P:response to calcium ion"/>
    <property type="evidence" value="ECO:0007669"/>
    <property type="project" value="Ensembl"/>
</dbReference>
<dbReference type="GO" id="GO:0043627">
    <property type="term" value="P:response to estrogen"/>
    <property type="evidence" value="ECO:0007669"/>
    <property type="project" value="Ensembl"/>
</dbReference>
<dbReference type="GO" id="GO:0001666">
    <property type="term" value="P:response to hypoxia"/>
    <property type="evidence" value="ECO:0007669"/>
    <property type="project" value="Ensembl"/>
</dbReference>
<dbReference type="GO" id="GO:0002931">
    <property type="term" value="P:response to ischemia"/>
    <property type="evidence" value="ECO:0007669"/>
    <property type="project" value="Ensembl"/>
</dbReference>
<dbReference type="GO" id="GO:0032570">
    <property type="term" value="P:response to progesterone"/>
    <property type="evidence" value="ECO:0007669"/>
    <property type="project" value="Ensembl"/>
</dbReference>
<dbReference type="GO" id="GO:0007519">
    <property type="term" value="P:skeletal muscle tissue development"/>
    <property type="evidence" value="ECO:0007669"/>
    <property type="project" value="Ensembl"/>
</dbReference>
<dbReference type="GO" id="GO:0031295">
    <property type="term" value="P:T cell costimulation"/>
    <property type="evidence" value="ECO:0000250"/>
    <property type="project" value="UniProtKB"/>
</dbReference>
<dbReference type="GO" id="GO:0006641">
    <property type="term" value="P:triglyceride metabolic process"/>
    <property type="evidence" value="ECO:0007669"/>
    <property type="project" value="Ensembl"/>
</dbReference>
<dbReference type="GO" id="GO:0001570">
    <property type="term" value="P:vasculogenesis"/>
    <property type="evidence" value="ECO:0007669"/>
    <property type="project" value="Ensembl"/>
</dbReference>
<dbReference type="GO" id="GO:0042310">
    <property type="term" value="P:vasoconstriction"/>
    <property type="evidence" value="ECO:0007669"/>
    <property type="project" value="Ensembl"/>
</dbReference>
<dbReference type="InterPro" id="IPR001612">
    <property type="entry name" value="Caveolin"/>
</dbReference>
<dbReference type="InterPro" id="IPR018361">
    <property type="entry name" value="Caveolin_CS"/>
</dbReference>
<dbReference type="PANTHER" id="PTHR10844">
    <property type="entry name" value="CAVEOLIN"/>
    <property type="match status" value="1"/>
</dbReference>
<dbReference type="PANTHER" id="PTHR10844:SF18">
    <property type="entry name" value="CAVEOLIN-1"/>
    <property type="match status" value="1"/>
</dbReference>
<dbReference type="Pfam" id="PF01146">
    <property type="entry name" value="Caveolin"/>
    <property type="match status" value="1"/>
</dbReference>
<dbReference type="PROSITE" id="PS01210">
    <property type="entry name" value="CAVEOLIN"/>
    <property type="match status" value="1"/>
</dbReference>
<keyword id="KW-0007">Acetylation</keyword>
<keyword id="KW-1003">Cell membrane</keyword>
<keyword id="KW-0333">Golgi apparatus</keyword>
<keyword id="KW-1017">Isopeptide bond</keyword>
<keyword id="KW-0449">Lipoprotein</keyword>
<keyword id="KW-0472">Membrane</keyword>
<keyword id="KW-0564">Palmitate</keyword>
<keyword id="KW-0597">Phosphoprotein</keyword>
<keyword id="KW-1185">Reference proteome</keyword>
<keyword id="KW-0832">Ubl conjugation</keyword>
<reference key="1">
    <citation type="journal article" date="2003" name="Nature">
        <title>Comparative analyses of multi-species sequences from targeted genomic regions.</title>
        <authorList>
            <person name="Thomas J.W."/>
            <person name="Touchman J.W."/>
            <person name="Blakesley R.W."/>
            <person name="Bouffard G.G."/>
            <person name="Beckstrom-Sternberg S.M."/>
            <person name="Margulies E.H."/>
            <person name="Blanchette M."/>
            <person name="Siepel A.C."/>
            <person name="Thomas P.J."/>
            <person name="McDowell J.C."/>
            <person name="Maskeri B."/>
            <person name="Hansen N.F."/>
            <person name="Schwartz M.S."/>
            <person name="Weber R.J."/>
            <person name="Kent W.J."/>
            <person name="Karolchik D."/>
            <person name="Bruen T.C."/>
            <person name="Bevan R."/>
            <person name="Cutler D.J."/>
            <person name="Schwartz S."/>
            <person name="Elnitski L."/>
            <person name="Idol J.R."/>
            <person name="Prasad A.B."/>
            <person name="Lee-Lin S.-Q."/>
            <person name="Maduro V.V.B."/>
            <person name="Summers T.J."/>
            <person name="Portnoy M.E."/>
            <person name="Dietrich N.L."/>
            <person name="Akhter N."/>
            <person name="Ayele K."/>
            <person name="Benjamin B."/>
            <person name="Cariaga K."/>
            <person name="Brinkley C.P."/>
            <person name="Brooks S.Y."/>
            <person name="Granite S."/>
            <person name="Guan X."/>
            <person name="Gupta J."/>
            <person name="Haghighi P."/>
            <person name="Ho S.-L."/>
            <person name="Huang M.C."/>
            <person name="Karlins E."/>
            <person name="Laric P.L."/>
            <person name="Legaspi R."/>
            <person name="Lim M.J."/>
            <person name="Maduro Q.L."/>
            <person name="Masiello C.A."/>
            <person name="Mastrian S.D."/>
            <person name="McCloskey J.C."/>
            <person name="Pearson R."/>
            <person name="Stantripop S."/>
            <person name="Tiongson E.E."/>
            <person name="Tran J.T."/>
            <person name="Tsurgeon C."/>
            <person name="Vogt J.L."/>
            <person name="Walker M.A."/>
            <person name="Wetherby K.D."/>
            <person name="Wiggins L.S."/>
            <person name="Young A.C."/>
            <person name="Zhang L.-H."/>
            <person name="Osoegawa K."/>
            <person name="Zhu B."/>
            <person name="Zhao B."/>
            <person name="Shu C.L."/>
            <person name="De Jong P.J."/>
            <person name="Lawrence C.E."/>
            <person name="Smit A.F."/>
            <person name="Chakravarti A."/>
            <person name="Haussler D."/>
            <person name="Green P."/>
            <person name="Miller W."/>
            <person name="Green E.D."/>
        </authorList>
    </citation>
    <scope>NUCLEOTIDE SEQUENCE [LARGE SCALE GENOMIC DNA]</scope>
</reference>
<feature type="initiator methionine" description="Removed" evidence="4">
    <location>
        <position position="1"/>
    </location>
</feature>
<feature type="chain" id="PRO_0000279730" description="Caveolin-1">
    <location>
        <begin position="2"/>
        <end position="178"/>
    </location>
</feature>
<feature type="topological domain" description="Cytoplasmic" evidence="6">
    <location>
        <begin position="2"/>
        <end position="104"/>
    </location>
</feature>
<feature type="intramembrane region" description="Helical" evidence="6">
    <location>
        <begin position="105"/>
        <end position="125"/>
    </location>
</feature>
<feature type="topological domain" description="Cytoplasmic" evidence="6">
    <location>
        <begin position="126"/>
        <end position="178"/>
    </location>
</feature>
<feature type="region of interest" description="Required for homooligomerization" evidence="4">
    <location>
        <begin position="2"/>
        <end position="94"/>
    </location>
</feature>
<feature type="region of interest" description="Interaction with CAVIN3" evidence="4">
    <location>
        <begin position="82"/>
        <end position="94"/>
    </location>
</feature>
<feature type="region of interest" description="Interacts with SPRY1, SPRY2, SPRY3 and SPRY4" evidence="3">
    <location>
        <begin position="131"/>
        <end position="142"/>
    </location>
</feature>
<feature type="region of interest" description="Interacts with SPRY1, SPRY2, and SPRY4" evidence="3">
    <location>
        <begin position="149"/>
        <end position="160"/>
    </location>
</feature>
<feature type="region of interest" description="Interacts with SPRY1, SPRY2, SPRY3 and SPRY4" evidence="3">
    <location>
        <begin position="167"/>
        <end position="178"/>
    </location>
</feature>
<feature type="modified residue" description="N-acetylserine" evidence="4">
    <location>
        <position position="2"/>
    </location>
</feature>
<feature type="modified residue" description="Phosphoserine" evidence="2">
    <location>
        <position position="2"/>
    </location>
</feature>
<feature type="modified residue" description="N6-acetyllysine; alternate" evidence="4">
    <location>
        <position position="5"/>
    </location>
</feature>
<feature type="modified residue" description="Phosphotyrosine" evidence="4">
    <location>
        <position position="6"/>
    </location>
</feature>
<feature type="modified residue" description="Phosphoserine" evidence="3">
    <location>
        <position position="9"/>
    </location>
</feature>
<feature type="modified residue" description="Phosphotyrosine; by ABL1" evidence="3">
    <location>
        <position position="14"/>
    </location>
</feature>
<feature type="modified residue" description="Phosphotyrosine" evidence="4">
    <location>
        <position position="25"/>
    </location>
</feature>
<feature type="modified residue" description="Phosphoserine" evidence="4">
    <location>
        <position position="37"/>
    </location>
</feature>
<feature type="lipid moiety-binding region" description="S-palmitoyl cysteine" evidence="1">
    <location>
        <position position="133"/>
    </location>
</feature>
<feature type="lipid moiety-binding region" description="S-palmitoyl cysteine" evidence="1">
    <location>
        <position position="143"/>
    </location>
</feature>
<feature type="lipid moiety-binding region" description="S-palmitoyl cysteine" evidence="1">
    <location>
        <position position="156"/>
    </location>
</feature>
<feature type="cross-link" description="Glycyl lysine isopeptide (Lys-Gly) (interchain with G-Cter in ubiquitin); alternate" evidence="4">
    <location>
        <position position="5"/>
    </location>
</feature>
<feature type="cross-link" description="Glycyl lysine isopeptide (Lys-Gly) (interchain with G-Cter in ubiquitin)" evidence="4">
    <location>
        <position position="26"/>
    </location>
</feature>
<feature type="cross-link" description="Glycyl lysine isopeptide (Lys-Gly) (interchain with G-Cter in ubiquitin)" evidence="4">
    <location>
        <position position="30"/>
    </location>
</feature>
<feature type="cross-link" description="Glycyl lysine isopeptide (Lys-Gly) (interchain with G-Cter in ubiquitin)" evidence="4">
    <location>
        <position position="39"/>
    </location>
</feature>
<feature type="cross-link" description="Glycyl lysine isopeptide (Lys-Gly) (interchain with G-Cter in ubiquitin)" evidence="4">
    <location>
        <position position="47"/>
    </location>
</feature>
<feature type="cross-link" description="Glycyl lysine isopeptide (Lys-Gly) (interchain with G-Cter in ubiquitin)" evidence="4">
    <location>
        <position position="57"/>
    </location>
</feature>
<proteinExistence type="inferred from homology"/>
<organism>
    <name type="scientific">Papio anubis</name>
    <name type="common">Olive baboon</name>
    <dbReference type="NCBI Taxonomy" id="9555"/>
    <lineage>
        <taxon>Eukaryota</taxon>
        <taxon>Metazoa</taxon>
        <taxon>Chordata</taxon>
        <taxon>Craniata</taxon>
        <taxon>Vertebrata</taxon>
        <taxon>Euteleostomi</taxon>
        <taxon>Mammalia</taxon>
        <taxon>Eutheria</taxon>
        <taxon>Euarchontoglires</taxon>
        <taxon>Primates</taxon>
        <taxon>Haplorrhini</taxon>
        <taxon>Catarrhini</taxon>
        <taxon>Cercopithecidae</taxon>
        <taxon>Cercopithecinae</taxon>
        <taxon>Papio</taxon>
    </lineage>
</organism>
<accession>A0M8R6</accession>
<name>CAV1_PAPAN</name>
<sequence>MSGGKYVDSEGHLYTVPIREQGNIYKPNNKAMADELSEKQVYDAHTKEIDLVNRDPKHLNDDVVKIDFEDVIAEPEGTHSFDGIWKASFTTFTVTKYWFYRLLSALFGIPMALVWGIYFAILSFLHIWAVVPCIKSFLIEIQCISRVYSIYVHTVCDPLFEAVGKIFSNVRINLQKEI</sequence>
<gene>
    <name type="primary">CAV1</name>
</gene>
<evidence type="ECO:0000250" key="1"/>
<evidence type="ECO:0000250" key="2">
    <source>
        <dbReference type="UniProtKB" id="P41350"/>
    </source>
</evidence>
<evidence type="ECO:0000250" key="3">
    <source>
        <dbReference type="UniProtKB" id="P49817"/>
    </source>
</evidence>
<evidence type="ECO:0000250" key="4">
    <source>
        <dbReference type="UniProtKB" id="Q03135"/>
    </source>
</evidence>
<evidence type="ECO:0000250" key="5">
    <source>
        <dbReference type="UniProtKB" id="Q2IBA5"/>
    </source>
</evidence>
<evidence type="ECO:0000255" key="6"/>
<evidence type="ECO:0000305" key="7"/>